<evidence type="ECO:0000250" key="1">
    <source>
        <dbReference type="UniProtKB" id="P00730"/>
    </source>
</evidence>
<evidence type="ECO:0000250" key="2">
    <source>
        <dbReference type="UniProtKB" id="P15087"/>
    </source>
</evidence>
<evidence type="ECO:0000250" key="3">
    <source>
        <dbReference type="UniProtKB" id="Q00493"/>
    </source>
</evidence>
<evidence type="ECO:0000255" key="4"/>
<evidence type="ECO:0000255" key="5">
    <source>
        <dbReference type="PROSITE-ProRule" id="PRU01379"/>
    </source>
</evidence>
<evidence type="ECO:0000305" key="6"/>
<keyword id="KW-0121">Carboxypeptidase</keyword>
<keyword id="KW-0165">Cleavage on pair of basic residues</keyword>
<keyword id="KW-0968">Cytoplasmic vesicle</keyword>
<keyword id="KW-0325">Glycoprotein</keyword>
<keyword id="KW-0378">Hydrolase</keyword>
<keyword id="KW-0472">Membrane</keyword>
<keyword id="KW-0479">Metal-binding</keyword>
<keyword id="KW-0482">Metalloprotease</keyword>
<keyword id="KW-0645">Protease</keyword>
<keyword id="KW-1185">Reference proteome</keyword>
<keyword id="KW-0964">Secreted</keyword>
<keyword id="KW-0732">Signal</keyword>
<keyword id="KW-0862">Zinc</keyword>
<keyword id="KW-0865">Zymogen</keyword>
<accession>A5A6K7</accession>
<sequence length="476" mass="53046">MAGRGGSALLALCGALAACGWLLGAEAQEPGAPAAGMRRRRRLQQEDGISFEYHRYPELREALVSVWLQCTAISRIYTVGRSFEGRELLVIELSDNPGVHEPGEPEFKYIGNMHGNEAVGRELLIFLAQYLCNEYQKGNETIVNLIHSTRIHIMPSLNPDGFEKAASQPGELKDWFVGRSNAQGIDLNRNFPDLDRIVYVNEKEGGPNNHLLKNMKKIVDQNTKLAPETKAVIHWIMDIPFVLSANLHGGDLVANYPYDETRSGSAHEYSSSPDDAIFQSLARAYSSFNPAMSDPNRPPCHKNDDDSSFVDGTTNGGAWYSVPGGMQDFNYLSSNCFEITVELSCEKFPPEETLKTYWEDNKNSLISYLEQIHRGVKGFVRDLQGNPIANATISVEGIDHDVTSAKDGDYWRLLIPGNYKLTASAPGYLAVTKKVAVPYSPAAGVDFELESFSGRKEEEKEELMEWWKMMSETLNF</sequence>
<feature type="signal peptide" evidence="4">
    <location>
        <begin position="1"/>
        <end position="25"/>
    </location>
</feature>
<feature type="propeptide" id="PRO_0000297554" description="Activation peptide">
    <location>
        <begin position="26"/>
        <end position="42"/>
    </location>
</feature>
<feature type="chain" id="PRO_0000297555" description="Carboxypeptidase E">
    <location>
        <begin position="43"/>
        <end position="476"/>
    </location>
</feature>
<feature type="domain" description="Peptidase M14" evidence="5">
    <location>
        <begin position="52"/>
        <end position="372"/>
    </location>
</feature>
<feature type="active site" description="Proton donor/acceptor" evidence="5">
    <location>
        <position position="342"/>
    </location>
</feature>
<feature type="binding site" evidence="5">
    <location>
        <position position="114"/>
    </location>
    <ligand>
        <name>Zn(2+)</name>
        <dbReference type="ChEBI" id="CHEBI:29105"/>
        <note>catalytic</note>
    </ligand>
</feature>
<feature type="binding site" evidence="5">
    <location>
        <position position="117"/>
    </location>
    <ligand>
        <name>Zn(2+)</name>
        <dbReference type="ChEBI" id="CHEBI:29105"/>
        <note>catalytic</note>
    </ligand>
</feature>
<feature type="binding site" evidence="5">
    <location>
        <position position="248"/>
    </location>
    <ligand>
        <name>Zn(2+)</name>
        <dbReference type="ChEBI" id="CHEBI:29105"/>
        <note>catalytic</note>
    </ligand>
</feature>
<feature type="glycosylation site" description="N-linked (GlcNAc...) asparagine" evidence="4">
    <location>
        <position position="139"/>
    </location>
</feature>
<feature type="glycosylation site" description="N-linked (GlcNAc...) asparagine" evidence="4">
    <location>
        <position position="390"/>
    </location>
</feature>
<gene>
    <name type="primary">CPE</name>
</gene>
<reference key="1">
    <citation type="journal article" date="2007" name="Gene">
        <title>Mapping of chimpanzee full-length cDNAs onto the human genome unveils large potential divergence of the transcriptome.</title>
        <authorList>
            <person name="Sakate R."/>
            <person name="Suto Y."/>
            <person name="Imanishi T."/>
            <person name="Tanoue T."/>
            <person name="Hida M."/>
            <person name="Hayasaka I."/>
            <person name="Kusuda J."/>
            <person name="Gojobori T."/>
            <person name="Hashimoto K."/>
            <person name="Hirai M."/>
        </authorList>
    </citation>
    <scope>NUCLEOTIDE SEQUENCE [MRNA]</scope>
    <source>
        <tissue>Brain</tissue>
    </source>
</reference>
<dbReference type="EC" id="3.4.17.10"/>
<dbReference type="EMBL" id="AB222135">
    <property type="protein sequence ID" value="BAF62380.1"/>
    <property type="molecule type" value="mRNA"/>
</dbReference>
<dbReference type="RefSeq" id="NP_001092029.1">
    <property type="nucleotide sequence ID" value="NM_001098559.1"/>
</dbReference>
<dbReference type="SMR" id="A5A6K7"/>
<dbReference type="STRING" id="9598.ENSPTRP00000038931"/>
<dbReference type="MEROPS" id="M14.005"/>
<dbReference type="GlyCosmos" id="A5A6K7">
    <property type="glycosylation" value="2 sites, No reported glycans"/>
</dbReference>
<dbReference type="PaxDb" id="9598-ENSPTRP00000038931"/>
<dbReference type="GeneID" id="461592"/>
<dbReference type="KEGG" id="ptr:461592"/>
<dbReference type="CTD" id="1363"/>
<dbReference type="eggNOG" id="KOG2649">
    <property type="taxonomic scope" value="Eukaryota"/>
</dbReference>
<dbReference type="InParanoid" id="A5A6K7"/>
<dbReference type="OrthoDB" id="8731at9604"/>
<dbReference type="Proteomes" id="UP000002277">
    <property type="component" value="Unplaced"/>
</dbReference>
<dbReference type="GO" id="GO:0005615">
    <property type="term" value="C:extracellular space"/>
    <property type="evidence" value="ECO:0000318"/>
    <property type="project" value="GO_Central"/>
</dbReference>
<dbReference type="GO" id="GO:0030658">
    <property type="term" value="C:transport vesicle membrane"/>
    <property type="evidence" value="ECO:0007669"/>
    <property type="project" value="UniProtKB-SubCell"/>
</dbReference>
<dbReference type="GO" id="GO:0004181">
    <property type="term" value="F:metallocarboxypeptidase activity"/>
    <property type="evidence" value="ECO:0000318"/>
    <property type="project" value="GO_Central"/>
</dbReference>
<dbReference type="GO" id="GO:0008270">
    <property type="term" value="F:zinc ion binding"/>
    <property type="evidence" value="ECO:0007669"/>
    <property type="project" value="InterPro"/>
</dbReference>
<dbReference type="GO" id="GO:0006518">
    <property type="term" value="P:peptide metabolic process"/>
    <property type="evidence" value="ECO:0000318"/>
    <property type="project" value="GO_Central"/>
</dbReference>
<dbReference type="GO" id="GO:0016485">
    <property type="term" value="P:protein processing"/>
    <property type="evidence" value="ECO:0000318"/>
    <property type="project" value="GO_Central"/>
</dbReference>
<dbReference type="CDD" id="cd03865">
    <property type="entry name" value="M14_CPE"/>
    <property type="match status" value="1"/>
</dbReference>
<dbReference type="CDD" id="cd11308">
    <property type="entry name" value="Peptidase_M14NE-CP-C_like"/>
    <property type="match status" value="1"/>
</dbReference>
<dbReference type="FunFam" id="2.60.40.1120:FF:000004">
    <property type="entry name" value="Carboxypeptidase E"/>
    <property type="match status" value="1"/>
</dbReference>
<dbReference type="FunFam" id="3.40.630.10:FF:000013">
    <property type="entry name" value="carboxypeptidase N catalytic chain"/>
    <property type="match status" value="1"/>
</dbReference>
<dbReference type="Gene3D" id="2.60.40.1120">
    <property type="entry name" value="Carboxypeptidase-like, regulatory domain"/>
    <property type="match status" value="1"/>
</dbReference>
<dbReference type="Gene3D" id="3.40.630.10">
    <property type="entry name" value="Zn peptidases"/>
    <property type="match status" value="1"/>
</dbReference>
<dbReference type="InterPro" id="IPR008969">
    <property type="entry name" value="CarboxyPept-like_regulatory"/>
</dbReference>
<dbReference type="InterPro" id="IPR034232">
    <property type="entry name" value="M14_CPE_CPD"/>
</dbReference>
<dbReference type="InterPro" id="IPR000834">
    <property type="entry name" value="Peptidase_M14"/>
</dbReference>
<dbReference type="InterPro" id="IPR050753">
    <property type="entry name" value="Peptidase_M14_domain"/>
</dbReference>
<dbReference type="PANTHER" id="PTHR11532:SF92">
    <property type="entry name" value="CARBOXYPEPTIDASE E"/>
    <property type="match status" value="1"/>
</dbReference>
<dbReference type="PANTHER" id="PTHR11532">
    <property type="entry name" value="PROTEASE M14 CARBOXYPEPTIDASE"/>
    <property type="match status" value="1"/>
</dbReference>
<dbReference type="Pfam" id="PF13620">
    <property type="entry name" value="CarboxypepD_reg"/>
    <property type="match status" value="1"/>
</dbReference>
<dbReference type="Pfam" id="PF00246">
    <property type="entry name" value="Peptidase_M14"/>
    <property type="match status" value="1"/>
</dbReference>
<dbReference type="PRINTS" id="PR00765">
    <property type="entry name" value="CRBOXYPTASEA"/>
</dbReference>
<dbReference type="SMART" id="SM00631">
    <property type="entry name" value="Zn_pept"/>
    <property type="match status" value="1"/>
</dbReference>
<dbReference type="SUPFAM" id="SSF49464">
    <property type="entry name" value="Carboxypeptidase regulatory domain-like"/>
    <property type="match status" value="1"/>
</dbReference>
<dbReference type="SUPFAM" id="SSF53187">
    <property type="entry name" value="Zn-dependent exopeptidases"/>
    <property type="match status" value="1"/>
</dbReference>
<dbReference type="PROSITE" id="PS00132">
    <property type="entry name" value="CARBOXYPEPT_ZN_1"/>
    <property type="match status" value="1"/>
</dbReference>
<dbReference type="PROSITE" id="PS00133">
    <property type="entry name" value="CARBOXYPEPT_ZN_2"/>
    <property type="match status" value="1"/>
</dbReference>
<dbReference type="PROSITE" id="PS52035">
    <property type="entry name" value="PEPTIDASE_M14"/>
    <property type="match status" value="1"/>
</dbReference>
<comment type="function">
    <text evidence="3">Sorting receptor that directs prohormones to the regulated secretory pathway. Also acts as a prohormone processing enzyme in neuro/endocrine cells, removing dibasic residues from the C-terminal end of peptide hormone precursors after initial endoprotease cleavage.</text>
</comment>
<comment type="catalytic activity">
    <reaction>
        <text>Release of C-terminal arginine or lysine residues from polypeptides.</text>
        <dbReference type="EC" id="3.4.17.10"/>
    </reaction>
</comment>
<comment type="cofactor">
    <cofactor evidence="1">
        <name>Zn(2+)</name>
        <dbReference type="ChEBI" id="CHEBI:29105"/>
    </cofactor>
    <text evidence="1">Binds 1 zinc ion per subunit.</text>
</comment>
<comment type="subunit">
    <text evidence="3">Interacts with secretogranin III/SCG3.</text>
</comment>
<comment type="subcellular location">
    <subcellularLocation>
        <location evidence="3">Cytoplasmic vesicle</location>
        <location evidence="3">Secretory vesicle</location>
    </subcellularLocation>
    <subcellularLocation>
        <location evidence="2">Cytoplasmic vesicle</location>
        <location evidence="2">Secretory vesicle membrane</location>
        <topology evidence="2">Peripheral membrane protein</topology>
    </subcellularLocation>
    <subcellularLocation>
        <location evidence="2">Secreted</location>
    </subcellularLocation>
    <text evidence="3">Associated with the secretory granule membrane through direct binding to lipid rafts in intragranular conditions.</text>
</comment>
<comment type="similarity">
    <text evidence="6">Belongs to the peptidase M14 family.</text>
</comment>
<proteinExistence type="evidence at transcript level"/>
<organism>
    <name type="scientific">Pan troglodytes</name>
    <name type="common">Chimpanzee</name>
    <dbReference type="NCBI Taxonomy" id="9598"/>
    <lineage>
        <taxon>Eukaryota</taxon>
        <taxon>Metazoa</taxon>
        <taxon>Chordata</taxon>
        <taxon>Craniata</taxon>
        <taxon>Vertebrata</taxon>
        <taxon>Euteleostomi</taxon>
        <taxon>Mammalia</taxon>
        <taxon>Eutheria</taxon>
        <taxon>Euarchontoglires</taxon>
        <taxon>Primates</taxon>
        <taxon>Haplorrhini</taxon>
        <taxon>Catarrhini</taxon>
        <taxon>Hominidae</taxon>
        <taxon>Pan</taxon>
    </lineage>
</organism>
<protein>
    <recommendedName>
        <fullName>Carboxypeptidase E</fullName>
        <shortName>CPE</shortName>
        <ecNumber>3.4.17.10</ecNumber>
    </recommendedName>
    <alternativeName>
        <fullName>Carboxypeptidase H</fullName>
        <shortName>CPH</shortName>
    </alternativeName>
    <alternativeName>
        <fullName>Enkephalin convertase</fullName>
    </alternativeName>
    <alternativeName>
        <fullName>Prohormone-processing carboxypeptidase</fullName>
    </alternativeName>
</protein>
<name>CBPE_PANTR</name>